<protein>
    <recommendedName>
        <fullName evidence="1">Elongation factor Ts</fullName>
        <shortName evidence="1">EF-Ts</shortName>
    </recommendedName>
</protein>
<reference key="1">
    <citation type="journal article" date="2006" name="Proc. Natl. Acad. Sci. U.S.A.">
        <title>Genome reduction in Leptospira borgpetersenii reflects limited transmission potential.</title>
        <authorList>
            <person name="Bulach D.M."/>
            <person name="Zuerner R.L."/>
            <person name="Wilson P."/>
            <person name="Seemann T."/>
            <person name="McGrath A."/>
            <person name="Cullen P.A."/>
            <person name="Davis J."/>
            <person name="Johnson M."/>
            <person name="Kuczek E."/>
            <person name="Alt D.P."/>
            <person name="Peterson-Burch B."/>
            <person name="Coppel R.L."/>
            <person name="Rood J.I."/>
            <person name="Davies J.K."/>
            <person name="Adler B."/>
        </authorList>
    </citation>
    <scope>NUCLEOTIDE SEQUENCE [LARGE SCALE GENOMIC DNA]</scope>
    <source>
        <strain>L550</strain>
    </source>
</reference>
<feature type="chain" id="PRO_1000006120" description="Elongation factor Ts">
    <location>
        <begin position="1"/>
        <end position="199"/>
    </location>
</feature>
<feature type="region of interest" description="Involved in Mg(2+) ion dislocation from EF-Tu" evidence="1">
    <location>
        <begin position="82"/>
        <end position="85"/>
    </location>
</feature>
<gene>
    <name evidence="1" type="primary">tsf</name>
    <name type="ordered locus">LBL_0920</name>
</gene>
<evidence type="ECO:0000255" key="1">
    <source>
        <dbReference type="HAMAP-Rule" id="MF_00050"/>
    </source>
</evidence>
<proteinExistence type="inferred from homology"/>
<keyword id="KW-0963">Cytoplasm</keyword>
<keyword id="KW-0251">Elongation factor</keyword>
<keyword id="KW-0648">Protein biosynthesis</keyword>
<sequence length="199" mass="22151">MAAVTTDLIRELRERTSAGMMDCKKALEENNADIEKAITWLREKGIAKAAKKAGRETKEGRIVSYIHGNGKIGVLLELNSETDFVSKNEEFEALGKEICMQIAAMNPLYLNEESIPAADLEREKGIMKSQLEAEGKKAEQIEKILPGKIKKYVSEVCLVNQAFFKDDSKTIDDLVKEAIAKFGENITIAHFVRFQVGGL</sequence>
<dbReference type="EMBL" id="CP000348">
    <property type="protein sequence ID" value="ABJ78461.1"/>
    <property type="molecule type" value="Genomic_DNA"/>
</dbReference>
<dbReference type="RefSeq" id="WP_011669749.1">
    <property type="nucleotide sequence ID" value="NC_008508.1"/>
</dbReference>
<dbReference type="SMR" id="Q053N4"/>
<dbReference type="KEGG" id="lbl:LBL_0920"/>
<dbReference type="HOGENOM" id="CLU_047155_1_1_12"/>
<dbReference type="GO" id="GO:0005737">
    <property type="term" value="C:cytoplasm"/>
    <property type="evidence" value="ECO:0007669"/>
    <property type="project" value="UniProtKB-SubCell"/>
</dbReference>
<dbReference type="GO" id="GO:0003746">
    <property type="term" value="F:translation elongation factor activity"/>
    <property type="evidence" value="ECO:0007669"/>
    <property type="project" value="UniProtKB-UniRule"/>
</dbReference>
<dbReference type="CDD" id="cd14275">
    <property type="entry name" value="UBA_EF-Ts"/>
    <property type="match status" value="1"/>
</dbReference>
<dbReference type="FunFam" id="1.10.8.10:FF:000001">
    <property type="entry name" value="Elongation factor Ts"/>
    <property type="match status" value="1"/>
</dbReference>
<dbReference type="Gene3D" id="1.10.286.20">
    <property type="match status" value="1"/>
</dbReference>
<dbReference type="Gene3D" id="1.10.8.10">
    <property type="entry name" value="DNA helicase RuvA subunit, C-terminal domain"/>
    <property type="match status" value="1"/>
</dbReference>
<dbReference type="Gene3D" id="3.30.479.20">
    <property type="entry name" value="Elongation factor Ts, dimerisation domain"/>
    <property type="match status" value="1"/>
</dbReference>
<dbReference type="HAMAP" id="MF_00050">
    <property type="entry name" value="EF_Ts"/>
    <property type="match status" value="1"/>
</dbReference>
<dbReference type="InterPro" id="IPR036402">
    <property type="entry name" value="EF-Ts_dimer_sf"/>
</dbReference>
<dbReference type="InterPro" id="IPR001816">
    <property type="entry name" value="Transl_elong_EFTs/EF1B"/>
</dbReference>
<dbReference type="InterPro" id="IPR014039">
    <property type="entry name" value="Transl_elong_EFTs/EF1B_dimer"/>
</dbReference>
<dbReference type="InterPro" id="IPR018101">
    <property type="entry name" value="Transl_elong_Ts_CS"/>
</dbReference>
<dbReference type="InterPro" id="IPR009060">
    <property type="entry name" value="UBA-like_sf"/>
</dbReference>
<dbReference type="NCBIfam" id="TIGR00116">
    <property type="entry name" value="tsf"/>
    <property type="match status" value="1"/>
</dbReference>
<dbReference type="PANTHER" id="PTHR11741">
    <property type="entry name" value="ELONGATION FACTOR TS"/>
    <property type="match status" value="1"/>
</dbReference>
<dbReference type="PANTHER" id="PTHR11741:SF0">
    <property type="entry name" value="ELONGATION FACTOR TS, MITOCHONDRIAL"/>
    <property type="match status" value="1"/>
</dbReference>
<dbReference type="Pfam" id="PF00889">
    <property type="entry name" value="EF_TS"/>
    <property type="match status" value="1"/>
</dbReference>
<dbReference type="SUPFAM" id="SSF54713">
    <property type="entry name" value="Elongation factor Ts (EF-Ts), dimerisation domain"/>
    <property type="match status" value="1"/>
</dbReference>
<dbReference type="SUPFAM" id="SSF46934">
    <property type="entry name" value="UBA-like"/>
    <property type="match status" value="1"/>
</dbReference>
<dbReference type="PROSITE" id="PS01126">
    <property type="entry name" value="EF_TS_1"/>
    <property type="match status" value="1"/>
</dbReference>
<dbReference type="PROSITE" id="PS01127">
    <property type="entry name" value="EF_TS_2"/>
    <property type="match status" value="1"/>
</dbReference>
<name>EFTS_LEPBL</name>
<accession>Q053N4</accession>
<comment type="function">
    <text evidence="1">Associates with the EF-Tu.GDP complex and induces the exchange of GDP to GTP. It remains bound to the aminoacyl-tRNA.EF-Tu.GTP complex up to the GTP hydrolysis stage on the ribosome.</text>
</comment>
<comment type="subcellular location">
    <subcellularLocation>
        <location evidence="1">Cytoplasm</location>
    </subcellularLocation>
</comment>
<comment type="similarity">
    <text evidence="1">Belongs to the EF-Ts family.</text>
</comment>
<organism>
    <name type="scientific">Leptospira borgpetersenii serovar Hardjo-bovis (strain L550)</name>
    <dbReference type="NCBI Taxonomy" id="355276"/>
    <lineage>
        <taxon>Bacteria</taxon>
        <taxon>Pseudomonadati</taxon>
        <taxon>Spirochaetota</taxon>
        <taxon>Spirochaetia</taxon>
        <taxon>Leptospirales</taxon>
        <taxon>Leptospiraceae</taxon>
        <taxon>Leptospira</taxon>
    </lineage>
</organism>